<reference key="1">
    <citation type="journal article" date="1994" name="Gene">
        <title>Cloning, characterization and expression of pepF, a gene encoding a serine carboxypeptidase from Aspergillus niger.</title>
        <authorList>
            <person name="van den Hombergh J.P.T.W."/>
            <person name="Jarai G."/>
            <person name="Buxton F.P."/>
            <person name="Visser J."/>
        </authorList>
    </citation>
    <scope>NUCLEOTIDE SEQUENCE [GENOMIC DNA]</scope>
    <source>
        <strain>ATCC 9029 / NRRL 3 / CBS 120.49 / DSM 2466 / N400 / FGSC 732</strain>
    </source>
</reference>
<reference key="2">
    <citation type="submission" date="1997-10" db="EMBL/GenBank/DDBJ databases">
        <authorList>
            <person name="Schaap P.J."/>
            <person name="Visser J."/>
        </authorList>
    </citation>
    <scope>SEQUENCE REVISION</scope>
</reference>
<reference key="3">
    <citation type="journal article" date="1992" name="Appl. Environ. Microbiol.">
        <title>Purification and characterization of two serine carboxypeptidases from Aspergillus niger and their use in C-terminal sequencing of proteins and peptide synthesis.</title>
        <authorList>
            <person name="Dal Degan F."/>
            <person name="Ribadeau-Dumas B."/>
            <person name="Breddam K."/>
        </authorList>
    </citation>
    <scope>PROTEIN SEQUENCE OF 53-71</scope>
    <scope>CHARACTERIZATION</scope>
</reference>
<evidence type="ECO:0000250" key="1"/>
<evidence type="ECO:0000255" key="2"/>
<evidence type="ECO:0000269" key="3">
    <source>
    </source>
</evidence>
<evidence type="ECO:0000305" key="4"/>
<comment type="function">
    <text>Removes any amino acid from the C-terminus of a long peptide. Digests preferentially peptides containing a positively charged residue in P1' position, as well as arginine, lysine or phenylalanine in P1 position of ester substrate. Also catalyzes peptide synthesis.</text>
</comment>
<comment type="activity regulation">
    <text>Inhibited by DFP, and Hg(Cl)2.</text>
</comment>
<comment type="biophysicochemical properties">
    <phDependence>
        <text>Optimum pH is 4. Unstable above pH 8.</text>
    </phDependence>
</comment>
<comment type="subunit">
    <text>Monomer.</text>
</comment>
<comment type="induction">
    <text>In the following growth conditions: acidic pH, absence of nitrogen or carbon source.</text>
</comment>
<comment type="similarity">
    <text evidence="4">Belongs to the peptidase S10 family.</text>
</comment>
<gene>
    <name type="primary">pepF</name>
</gene>
<organism>
    <name type="scientific">Aspergillus niger</name>
    <dbReference type="NCBI Taxonomy" id="5061"/>
    <lineage>
        <taxon>Eukaryota</taxon>
        <taxon>Fungi</taxon>
        <taxon>Dikarya</taxon>
        <taxon>Ascomycota</taxon>
        <taxon>Pezizomycotina</taxon>
        <taxon>Eurotiomycetes</taxon>
        <taxon>Eurotiomycetidae</taxon>
        <taxon>Eurotiales</taxon>
        <taxon>Aspergillaceae</taxon>
        <taxon>Aspergillus</taxon>
        <taxon>Aspergillus subgen. Circumdati</taxon>
    </lineage>
</organism>
<sequence>MLFRSLLSTAVLAVSLCTDNASAAKHGRFGQKARDAMNIAKRSANAVKHSLKIPVEDYQFLNNKTKPYRVESLPDVHFDLGEMYSGLVPIEKGNVSRSLFFVFQPTIGEPVDEITIWLNGGPGCSSLEAFLQENGRFVWQPGTYQPVENPYSWVNLTNVLWVDQPVGTGFSLGVPTATSEEEIAEDFVKFFKNWQQIFGIKNFKIYVTGESYAGRYVPYISAAFLDQNDTEHFNLKGALAYDPCIGQFDYVQEEAPVVPFVQKNNALFNFNASFLAELESIHEQCGYKDFIDQYLVFPASGVQPPKAMNWSDPTCDVYDIVNNAVLDPNPCFNPYEINEMCPILWDVLGFPTEVDYLPAGASIYFDRADVKRAMHAPNITWSECSVESVFVGGDGGPEQEGDYSANPIEHVLPQVIEGTNRVLIGNGDYDMVILTNGTLLSIQNMTWNGKLGFDTAPSTPINIDIPDLMYNEVFIENGYDPQGGQGVMGIQHYERGLMWAETFQSGHMQPQFQPRVSYRHLEWLLGRRDTL</sequence>
<keyword id="KW-0121">Carboxypeptidase</keyword>
<keyword id="KW-0903">Direct protein sequencing</keyword>
<keyword id="KW-0325">Glycoprotein</keyword>
<keyword id="KW-0378">Hydrolase</keyword>
<keyword id="KW-0645">Protease</keyword>
<keyword id="KW-0732">Signal</keyword>
<keyword id="KW-0865">Zymogen</keyword>
<name>PEPF_ASPNG</name>
<proteinExistence type="evidence at protein level"/>
<feature type="signal peptide" evidence="2">
    <location>
        <begin position="1"/>
        <end position="25"/>
    </location>
</feature>
<feature type="propeptide" id="PRO_0000004297" evidence="3">
    <location>
        <begin position="26"/>
        <end position="52"/>
    </location>
</feature>
<feature type="chain" id="PRO_0000004298" description="Serine-type carboxypeptidase F">
    <location>
        <begin position="53"/>
        <end position="531"/>
    </location>
</feature>
<feature type="active site" evidence="1">
    <location>
        <position position="211"/>
    </location>
</feature>
<feature type="active site" evidence="1">
    <location>
        <position position="430"/>
    </location>
</feature>
<feature type="active site" evidence="1">
    <location>
        <position position="507"/>
    </location>
</feature>
<feature type="glycosylation site" description="N-linked (GlcNAc...) asparagine" evidence="2">
    <location>
        <position position="20"/>
    </location>
</feature>
<feature type="glycosylation site" description="N-linked (GlcNAc...) asparagine" evidence="2">
    <location>
        <position position="63"/>
    </location>
</feature>
<feature type="glycosylation site" description="N-linked (GlcNAc...) asparagine" evidence="2">
    <location>
        <position position="94"/>
    </location>
</feature>
<feature type="glycosylation site" description="N-linked (GlcNAc...) asparagine" evidence="2">
    <location>
        <position position="155"/>
    </location>
</feature>
<feature type="glycosylation site" description="N-linked (GlcNAc...) asparagine" evidence="2">
    <location>
        <position position="228"/>
    </location>
</feature>
<feature type="glycosylation site" description="N-linked (GlcNAc...) asparagine" evidence="2">
    <location>
        <position position="271"/>
    </location>
</feature>
<feature type="glycosylation site" description="N-linked (GlcNAc...) asparagine" evidence="2">
    <location>
        <position position="309"/>
    </location>
</feature>
<feature type="glycosylation site" description="N-linked (GlcNAc...) asparagine" evidence="2">
    <location>
        <position position="378"/>
    </location>
</feature>
<feature type="glycosylation site" description="N-linked (GlcNAc...) asparagine" evidence="2">
    <location>
        <position position="436"/>
    </location>
</feature>
<feature type="glycosylation site" description="N-linked (GlcNAc...) asparagine" evidence="2">
    <location>
        <position position="444"/>
    </location>
</feature>
<feature type="sequence conflict" description="In Ref. 3; AA sequence." evidence="4" ref="3">
    <original>I</original>
    <variation>A</variation>
    <location>
        <position position="53"/>
    </location>
</feature>
<feature type="sequence conflict" description="In Ref. 3; AA sequence." evidence="4" ref="3">
    <original>D</original>
    <variation>F</variation>
    <location>
        <position position="57"/>
    </location>
</feature>
<feature type="sequence conflict" description="In Ref. 3; AA sequence." evidence="4" ref="3">
    <original>N</original>
    <variation>Y</variation>
    <location>
        <position position="63"/>
    </location>
</feature>
<feature type="sequence conflict" description="In Ref. 3; AA sequence." evidence="4" ref="3">
    <original>Y</original>
    <variation>D</variation>
    <location>
        <position position="68"/>
    </location>
</feature>
<accession>P52718</accession>
<dbReference type="EC" id="3.4.16.-"/>
<dbReference type="EMBL" id="X79541">
    <property type="protein sequence ID" value="CAA56075.1"/>
    <property type="molecule type" value="Genomic_DNA"/>
</dbReference>
<dbReference type="EMBL" id="L33408">
    <property type="protein sequence ID" value="AAB57723.1"/>
    <property type="molecule type" value="Genomic_DNA"/>
</dbReference>
<dbReference type="PIR" id="S57907">
    <property type="entry name" value="S57907"/>
</dbReference>
<dbReference type="RefSeq" id="XP_001391878.1">
    <property type="nucleotide sequence ID" value="XM_001391841.3"/>
</dbReference>
<dbReference type="SMR" id="P52718"/>
<dbReference type="ESTHER" id="aspng-pepf">
    <property type="family name" value="Carboxypeptidase_S10"/>
</dbReference>
<dbReference type="MEROPS" id="S10.006"/>
<dbReference type="GlyCosmos" id="P52718">
    <property type="glycosylation" value="10 sites, No reported glycans"/>
</dbReference>
<dbReference type="PaxDb" id="5061-CADANGAP00005956"/>
<dbReference type="EnsemblFungi" id="CAK39619">
    <property type="protein sequence ID" value="CAK39619"/>
    <property type="gene ID" value="An07g08030"/>
</dbReference>
<dbReference type="GeneID" id="4982072"/>
<dbReference type="KEGG" id="ang:An07g08030"/>
<dbReference type="VEuPathDB" id="FungiDB:An07g08030"/>
<dbReference type="VEuPathDB" id="FungiDB:ASPNIDRAFT2_1120907"/>
<dbReference type="VEuPathDB" id="FungiDB:ATCC64974_48920"/>
<dbReference type="VEuPathDB" id="FungiDB:M747DRAFT_292917"/>
<dbReference type="eggNOG" id="KOG1282">
    <property type="taxonomic scope" value="Eukaryota"/>
</dbReference>
<dbReference type="OrthoDB" id="443318at2759"/>
<dbReference type="GO" id="GO:0004185">
    <property type="term" value="F:serine-type carboxypeptidase activity"/>
    <property type="evidence" value="ECO:0007669"/>
    <property type="project" value="InterPro"/>
</dbReference>
<dbReference type="GO" id="GO:0006508">
    <property type="term" value="P:proteolysis"/>
    <property type="evidence" value="ECO:0007669"/>
    <property type="project" value="UniProtKB-KW"/>
</dbReference>
<dbReference type="FunFam" id="3.40.50.1820:FF:000118">
    <property type="entry name" value="Carboxypeptidase"/>
    <property type="match status" value="1"/>
</dbReference>
<dbReference type="Gene3D" id="3.40.50.1820">
    <property type="entry name" value="alpha/beta hydrolase"/>
    <property type="match status" value="1"/>
</dbReference>
<dbReference type="InterPro" id="IPR029058">
    <property type="entry name" value="AB_hydrolase_fold"/>
</dbReference>
<dbReference type="InterPro" id="IPR001563">
    <property type="entry name" value="Peptidase_S10"/>
</dbReference>
<dbReference type="InterPro" id="IPR033124">
    <property type="entry name" value="Ser_caboxypep_his_AS"/>
</dbReference>
<dbReference type="InterPro" id="IPR018202">
    <property type="entry name" value="Ser_caboxypep_ser_AS"/>
</dbReference>
<dbReference type="PANTHER" id="PTHR11802:SF479">
    <property type="entry name" value="CARBOXYPEPTIDASE"/>
    <property type="match status" value="1"/>
</dbReference>
<dbReference type="PANTHER" id="PTHR11802">
    <property type="entry name" value="SERINE PROTEASE FAMILY S10 SERINE CARBOXYPEPTIDASE"/>
    <property type="match status" value="1"/>
</dbReference>
<dbReference type="Pfam" id="PF00450">
    <property type="entry name" value="Peptidase_S10"/>
    <property type="match status" value="1"/>
</dbReference>
<dbReference type="PRINTS" id="PR00724">
    <property type="entry name" value="CRBOXYPTASEC"/>
</dbReference>
<dbReference type="SUPFAM" id="SSF53474">
    <property type="entry name" value="alpha/beta-Hydrolases"/>
    <property type="match status" value="1"/>
</dbReference>
<dbReference type="PROSITE" id="PS00560">
    <property type="entry name" value="CARBOXYPEPT_SER_HIS"/>
    <property type="match status" value="1"/>
</dbReference>
<dbReference type="PROSITE" id="PS00131">
    <property type="entry name" value="CARBOXYPEPT_SER_SER"/>
    <property type="match status" value="1"/>
</dbReference>
<protein>
    <recommendedName>
        <fullName>Serine-type carboxypeptidase F</fullName>
        <shortName>Proteinase F</shortName>
        <ecNumber>3.4.16.-</ecNumber>
    </recommendedName>
    <alternativeName>
        <fullName>CPD-II</fullName>
    </alternativeName>
</protein>